<name>ESSC_STAAN</name>
<evidence type="ECO:0000250" key="1">
    <source>
        <dbReference type="UniProtKB" id="P0C048"/>
    </source>
</evidence>
<evidence type="ECO:0000250" key="2">
    <source>
        <dbReference type="UniProtKB" id="Q2G184"/>
    </source>
</evidence>
<evidence type="ECO:0000255" key="3"/>
<evidence type="ECO:0000255" key="4">
    <source>
        <dbReference type="PROSITE-ProRule" id="PRU00289"/>
    </source>
</evidence>
<evidence type="ECO:0000305" key="5"/>
<keyword id="KW-0067">ATP-binding</keyword>
<keyword id="KW-1003">Cell membrane</keyword>
<keyword id="KW-0472">Membrane</keyword>
<keyword id="KW-0547">Nucleotide-binding</keyword>
<keyword id="KW-0677">Repeat</keyword>
<keyword id="KW-0812">Transmembrane</keyword>
<keyword id="KW-1133">Transmembrane helix</keyword>
<keyword id="KW-0843">Virulence</keyword>
<organism>
    <name type="scientific">Staphylococcus aureus (strain N315)</name>
    <dbReference type="NCBI Taxonomy" id="158879"/>
    <lineage>
        <taxon>Bacteria</taxon>
        <taxon>Bacillati</taxon>
        <taxon>Bacillota</taxon>
        <taxon>Bacilli</taxon>
        <taxon>Bacillales</taxon>
        <taxon>Staphylococcaceae</taxon>
        <taxon>Staphylococcus</taxon>
    </lineage>
</organism>
<gene>
    <name evidence="1" type="primary">essC</name>
    <name type="ordered locus">SA0276</name>
</gene>
<sequence length="1479" mass="170932">MHKLIIKYNKQLKMLNLRDGKTYTISEDERADITLKSLGEVIHLEQNNQGTWQANHTSINKVLVRKGDLDDITLQLYTEADYASFAYPSIQDTMTIGPNAYDDMVIQSLMNAIIIKDFQSIQESQYVRIVHDKNTDVYINYELQEQLTNKAYIGDHIYVEGIWLEVQADGLNVLSQNTVASSLIRLTQEMPHAQADDYNTYHRSPRIIHREPTDDIKIERPPQPIQKNNTVIWRSIIPPLVMIALTVVIFLVRPIGIYILMMIGMSTVTIVFGITTYFSEKKKYNKDVEKREKDYKAYLDNKSKEINKAIKAQRFSLNYHYPTVAEIKDIVETKAPRIYEKTSHHHDFLHYKLGIANVEKSFKLDYQEEEFNQRRDELFDDAKELYEFYTDVEQAPLINDLNHGPIAYIGARHLILEELEKMLIQLSTFHSYHDLEFLFVTREDEVETLKWARWLPHMTLRGQNIRGFVYNQRTRDQILTSIYSMIKERIQAVRERSRSNEQIIFTPQLVFVITDMSLIIDHVILEYVNQDLSEYGISLIFVEDVIESLPEHVDTIIDIKSRTEGELITKEKELVQLKFTPENIDNVDKEYIARRLANLIHVEHLKNAIPDSITFLEMYNVKEVDQLDVVNRWRQNETYKTMAVPLGVRGKDDILSLNLHEKAHGPHGLVAGTTGSGKSEIIQSYILSLAINFHPHEVAFLLIDYKGGGMANLFKDLVHLVGTITNLDGDEAMRALTSIKAELRKRQRLFGEHDVNHINQYHKLFKEGVATEPMPHLFIISDEFAELKSEQPDFMKELVSTARIGRSLGIHLILATQKPSGVVDDQIWSNSKFKLALKVQDRQDSNEILKTPDAADITLPGRAYLQVGNNEIYELFQSAWSGATYDIEGDKLEVEDKTIYMINDYGQLQAINKDLSGLEDEETKENQTELEAVIDHIESITTRLEIEEVKRPWLPPLPENVYQEDLVETDFRKLWSDDAKEVELTLGLKDVPEEQYQGPMVLQLKKAGHIALIGSPGYGRTTFLHNIIFDVARHHRPDQAHMYLFDFGTNGLMPVTDIPHVADYFTVDQEDKIAKAIRIFNDEIDRRKKILSQYRVTSISEYRKLTGETIPYVFILIDNFDAVKDSPFQEVFENMMIKMTREGLALDMQVTLTASRANAMKTPMYINMKTRIAMFLYDKSEVSNVVGQQKFAVKDVVGRALLSSDDNVSFHIGQPFKHDETKSYNDQINDEVSAMTEFYKGETPNDIPMMPDEIKYEDYRESLSLPDIVANGALPIGLDYEGVTLQKIKLTEPAMISSENPREIAHIAEIMMKEIDILNEKYAICIADSSGEFKAYRHQVANFAEEREDIKAIHQLMIEDLKQREMDGPFEKDSLYIINDFKTYIDCTYIPEDDVKKLITKGPELGLNILFVGIHKELIDAYDKQIDVARKMINQFSIGIRISDQQFFKFRFIQREPVIKENEAYMVANQAYQKIRWFK</sequence>
<accession>Q99WT9</accession>
<protein>
    <recommendedName>
        <fullName evidence="1">Type VII secretion system protein EssC</fullName>
    </recommendedName>
</protein>
<feature type="chain" id="PRO_0000098331" description="Type VII secretion system protein EssC">
    <location>
        <begin position="1"/>
        <end position="1479"/>
    </location>
</feature>
<feature type="topological domain" description="Cytoplasmic" evidence="1">
    <location>
        <begin position="1"/>
        <end position="229"/>
    </location>
</feature>
<feature type="transmembrane region" description="Helical" evidence="3">
    <location>
        <begin position="230"/>
        <end position="252"/>
    </location>
</feature>
<feature type="topological domain" description="Extracellular" evidence="1">
    <location>
        <begin position="253"/>
        <end position="256"/>
    </location>
</feature>
<feature type="transmembrane region" description="Helical" evidence="3">
    <location>
        <begin position="257"/>
        <end position="279"/>
    </location>
</feature>
<feature type="topological domain" description="Cytoplasmic" evidence="1">
    <location>
        <begin position="280"/>
        <end position="1479"/>
    </location>
</feature>
<feature type="domain" description="FtsK 1" evidence="4">
    <location>
        <begin position="652"/>
        <end position="846"/>
    </location>
</feature>
<feature type="domain" description="FtsK 2" evidence="4">
    <location>
        <begin position="997"/>
        <end position="1183"/>
    </location>
</feature>
<feature type="binding site" evidence="4">
    <location>
        <begin position="672"/>
        <end position="679"/>
    </location>
    <ligand>
        <name>ATP</name>
        <dbReference type="ChEBI" id="CHEBI:30616"/>
    </ligand>
</feature>
<feature type="binding site" evidence="4">
    <location>
        <begin position="1014"/>
        <end position="1021"/>
    </location>
    <ligand>
        <name>ATP</name>
        <dbReference type="ChEBI" id="CHEBI:30616"/>
    </ligand>
</feature>
<comment type="function">
    <text evidence="2">Component of the type VII secretion system (Ess). Required for the secretion of substrates including EsxA and EsxB. However, unable to support secretion of the substrate protein EsxC.</text>
</comment>
<comment type="subunit">
    <text evidence="2">Homooligomer. Interacts with EsaE.</text>
</comment>
<comment type="subcellular location">
    <subcellularLocation>
        <location evidence="2">Cell membrane</location>
        <topology evidence="3">Multi-pass membrane protein</topology>
    </subcellularLocation>
</comment>
<comment type="similarity">
    <text evidence="5">Belongs to the EssC family.</text>
</comment>
<reference key="1">
    <citation type="journal article" date="2001" name="Lancet">
        <title>Whole genome sequencing of meticillin-resistant Staphylococcus aureus.</title>
        <authorList>
            <person name="Kuroda M."/>
            <person name="Ohta T."/>
            <person name="Uchiyama I."/>
            <person name="Baba T."/>
            <person name="Yuzawa H."/>
            <person name="Kobayashi I."/>
            <person name="Cui L."/>
            <person name="Oguchi A."/>
            <person name="Aoki K."/>
            <person name="Nagai Y."/>
            <person name="Lian J.-Q."/>
            <person name="Ito T."/>
            <person name="Kanamori M."/>
            <person name="Matsumaru H."/>
            <person name="Maruyama A."/>
            <person name="Murakami H."/>
            <person name="Hosoyama A."/>
            <person name="Mizutani-Ui Y."/>
            <person name="Takahashi N.K."/>
            <person name="Sawano T."/>
            <person name="Inoue R."/>
            <person name="Kaito C."/>
            <person name="Sekimizu K."/>
            <person name="Hirakawa H."/>
            <person name="Kuhara S."/>
            <person name="Goto S."/>
            <person name="Yabuzaki J."/>
            <person name="Kanehisa M."/>
            <person name="Yamashita A."/>
            <person name="Oshima K."/>
            <person name="Furuya K."/>
            <person name="Yoshino C."/>
            <person name="Shiba T."/>
            <person name="Hattori M."/>
            <person name="Ogasawara N."/>
            <person name="Hayashi H."/>
            <person name="Hiramatsu K."/>
        </authorList>
    </citation>
    <scope>NUCLEOTIDE SEQUENCE [LARGE SCALE GENOMIC DNA]</scope>
    <source>
        <strain>N315</strain>
    </source>
</reference>
<dbReference type="EMBL" id="BA000018">
    <property type="protein sequence ID" value="BAB41500.1"/>
    <property type="molecule type" value="Genomic_DNA"/>
</dbReference>
<dbReference type="PIR" id="A89793">
    <property type="entry name" value="A89793"/>
</dbReference>
<dbReference type="RefSeq" id="WP_000549287.1">
    <property type="nucleotide sequence ID" value="NC_002745.2"/>
</dbReference>
<dbReference type="SMR" id="Q99WT9"/>
<dbReference type="EnsemblBacteria" id="BAB41500">
    <property type="protein sequence ID" value="BAB41500"/>
    <property type="gene ID" value="BAB41500"/>
</dbReference>
<dbReference type="KEGG" id="sau:SA0276"/>
<dbReference type="HOGENOM" id="CLU_003134_2_1_9"/>
<dbReference type="GO" id="GO:0005886">
    <property type="term" value="C:plasma membrane"/>
    <property type="evidence" value="ECO:0007669"/>
    <property type="project" value="UniProtKB-SubCell"/>
</dbReference>
<dbReference type="GO" id="GO:0005524">
    <property type="term" value="F:ATP binding"/>
    <property type="evidence" value="ECO:0007669"/>
    <property type="project" value="UniProtKB-KW"/>
</dbReference>
<dbReference type="GO" id="GO:0003677">
    <property type="term" value="F:DNA binding"/>
    <property type="evidence" value="ECO:0007669"/>
    <property type="project" value="InterPro"/>
</dbReference>
<dbReference type="CDD" id="cd01127">
    <property type="entry name" value="TrwB_TraG_TraD_VirD4"/>
    <property type="match status" value="1"/>
</dbReference>
<dbReference type="Gene3D" id="2.60.200.20">
    <property type="match status" value="2"/>
</dbReference>
<dbReference type="Gene3D" id="3.40.50.300">
    <property type="entry name" value="P-loop containing nucleotide triphosphate hydrolases"/>
    <property type="match status" value="2"/>
</dbReference>
<dbReference type="InterPro" id="IPR023839">
    <property type="entry name" value="Firmicutes_EssC_C"/>
</dbReference>
<dbReference type="InterPro" id="IPR022206">
    <property type="entry name" value="Firmicutes_EssC_N"/>
</dbReference>
<dbReference type="InterPro" id="IPR050206">
    <property type="entry name" value="FtsK/SpoIIIE/SftA"/>
</dbReference>
<dbReference type="InterPro" id="IPR002543">
    <property type="entry name" value="FtsK_dom"/>
</dbReference>
<dbReference type="InterPro" id="IPR027417">
    <property type="entry name" value="P-loop_NTPase"/>
</dbReference>
<dbReference type="InterPro" id="IPR008984">
    <property type="entry name" value="SMAD_FHA_dom_sf"/>
</dbReference>
<dbReference type="NCBIfam" id="TIGR03928">
    <property type="entry name" value="T7_EssCb_Firm"/>
    <property type="match status" value="1"/>
</dbReference>
<dbReference type="PANTHER" id="PTHR22683:SF41">
    <property type="entry name" value="DNA TRANSLOCASE FTSK"/>
    <property type="match status" value="1"/>
</dbReference>
<dbReference type="PANTHER" id="PTHR22683">
    <property type="entry name" value="SPORULATION PROTEIN RELATED"/>
    <property type="match status" value="1"/>
</dbReference>
<dbReference type="Pfam" id="PF01580">
    <property type="entry name" value="FtsK_SpoIIIE"/>
    <property type="match status" value="2"/>
</dbReference>
<dbReference type="Pfam" id="PF12538">
    <property type="entry name" value="FtsK_SpoIIIE_N"/>
    <property type="match status" value="1"/>
</dbReference>
<dbReference type="SUPFAM" id="SSF52540">
    <property type="entry name" value="P-loop containing nucleoside triphosphate hydrolases"/>
    <property type="match status" value="2"/>
</dbReference>
<dbReference type="SUPFAM" id="SSF49879">
    <property type="entry name" value="SMAD/FHA domain"/>
    <property type="match status" value="2"/>
</dbReference>
<dbReference type="PROSITE" id="PS50901">
    <property type="entry name" value="FTSK"/>
    <property type="match status" value="2"/>
</dbReference>
<proteinExistence type="inferred from homology"/>